<proteinExistence type="inferred from homology"/>
<dbReference type="EMBL" id="CP000155">
    <property type="protein sequence ID" value="ABC28091.1"/>
    <property type="molecule type" value="Genomic_DNA"/>
</dbReference>
<dbReference type="RefSeq" id="WP_011395164.1">
    <property type="nucleotide sequence ID" value="NC_007645.1"/>
</dbReference>
<dbReference type="SMR" id="Q2SMN3"/>
<dbReference type="STRING" id="349521.HCH_01218"/>
<dbReference type="KEGG" id="hch:HCH_01218"/>
<dbReference type="eggNOG" id="COG2914">
    <property type="taxonomic scope" value="Bacteria"/>
</dbReference>
<dbReference type="HOGENOM" id="CLU_150721_1_0_6"/>
<dbReference type="OrthoDB" id="9796575at2"/>
<dbReference type="Proteomes" id="UP000000238">
    <property type="component" value="Chromosome"/>
</dbReference>
<dbReference type="Gene3D" id="3.10.20.280">
    <property type="entry name" value="RnfH-like"/>
    <property type="match status" value="1"/>
</dbReference>
<dbReference type="HAMAP" id="MF_00460">
    <property type="entry name" value="UPF0125_RnfH"/>
    <property type="match status" value="1"/>
</dbReference>
<dbReference type="InterPro" id="IPR016155">
    <property type="entry name" value="Mopterin_synth/thiamin_S_b"/>
</dbReference>
<dbReference type="InterPro" id="IPR005346">
    <property type="entry name" value="RnfH"/>
</dbReference>
<dbReference type="InterPro" id="IPR037021">
    <property type="entry name" value="RnfH_sf"/>
</dbReference>
<dbReference type="NCBIfam" id="NF002490">
    <property type="entry name" value="PRK01777.1"/>
    <property type="match status" value="1"/>
</dbReference>
<dbReference type="PANTHER" id="PTHR37483">
    <property type="entry name" value="UPF0125 PROTEIN RATB"/>
    <property type="match status" value="1"/>
</dbReference>
<dbReference type="PANTHER" id="PTHR37483:SF1">
    <property type="entry name" value="UPF0125 PROTEIN RATB"/>
    <property type="match status" value="1"/>
</dbReference>
<dbReference type="Pfam" id="PF03658">
    <property type="entry name" value="Ub-RnfH"/>
    <property type="match status" value="1"/>
</dbReference>
<dbReference type="SUPFAM" id="SSF54285">
    <property type="entry name" value="MoaD/ThiS"/>
    <property type="match status" value="1"/>
</dbReference>
<evidence type="ECO:0000255" key="1">
    <source>
        <dbReference type="HAMAP-Rule" id="MF_00460"/>
    </source>
</evidence>
<accession>Q2SMN3</accession>
<comment type="similarity">
    <text evidence="1">Belongs to the UPF0125 (RnfH) family.</text>
</comment>
<gene>
    <name evidence="1" type="primary">rnfH</name>
    <name type="ordered locus">HCH_01218</name>
</gene>
<reference key="1">
    <citation type="journal article" date="2005" name="Nucleic Acids Res.">
        <title>Genomic blueprint of Hahella chejuensis, a marine microbe producing an algicidal agent.</title>
        <authorList>
            <person name="Jeong H."/>
            <person name="Yim J.H."/>
            <person name="Lee C."/>
            <person name="Choi S.-H."/>
            <person name="Park Y.K."/>
            <person name="Yoon S.H."/>
            <person name="Hur C.-G."/>
            <person name="Kang H.-Y."/>
            <person name="Kim D."/>
            <person name="Lee H.H."/>
            <person name="Park K.H."/>
            <person name="Park S.-H."/>
            <person name="Park H.-S."/>
            <person name="Lee H.K."/>
            <person name="Oh T.K."/>
            <person name="Kim J.F."/>
        </authorList>
    </citation>
    <scope>NUCLEOTIDE SEQUENCE [LARGE SCALE GENOMIC DNA]</scope>
    <source>
        <strain>KCTC 2396</strain>
    </source>
</reference>
<sequence length="96" mass="10775">MDKLKIQVEVAYALPEQQKIIPLAVVEGTTAYEAVQMSGITHFFPQIELDSAKMGIFGKSIPEPKSHALREGDRVEIYRPLKIDPKQARLNRAKKG</sequence>
<feature type="chain" id="PRO_1000013577" description="Protein RnfH">
    <location>
        <begin position="1"/>
        <end position="96"/>
    </location>
</feature>
<keyword id="KW-1185">Reference proteome</keyword>
<organism>
    <name type="scientific">Hahella chejuensis (strain KCTC 2396)</name>
    <dbReference type="NCBI Taxonomy" id="349521"/>
    <lineage>
        <taxon>Bacteria</taxon>
        <taxon>Pseudomonadati</taxon>
        <taxon>Pseudomonadota</taxon>
        <taxon>Gammaproteobacteria</taxon>
        <taxon>Oceanospirillales</taxon>
        <taxon>Hahellaceae</taxon>
        <taxon>Hahella</taxon>
    </lineage>
</organism>
<name>RNFH_HAHCH</name>
<protein>
    <recommendedName>
        <fullName evidence="1">Protein RnfH</fullName>
    </recommendedName>
</protein>